<sequence length="214" mass="23681">MASVSPLAKFKLVFLGDQSVGKTSIITRFMYDKFDTTYQPTIGIDFLSKTMYLEDRTVRLQLWDTAGQERFRSLIPSYIRDSSVAIVVYDVSNRQTFLNTSKWIEDVHRERGQSNVIIVLVGNKTDLVEKRQVSISEGEDKGKEYGVMFIETSAKENFNIKALFRKIAAALPGVDSYSLATKSDDMVDVNLKTTSNSSQGEQQGGAGGGGGCSC</sequence>
<comment type="function">
    <text evidence="1">Protein transport. Regulator of membrane traffic from the Golgi apparatus towards the endoplasmic reticulum (ER) (By similarity).</text>
</comment>
<comment type="subunit">
    <text evidence="3">Interacts with the C-terminus of GC5, but not with GC3.</text>
</comment>
<comment type="subcellular location">
    <subcellularLocation>
        <location evidence="6">Golgi apparatus membrane</location>
        <topology evidence="6">Lipid-anchor</topology>
    </subcellularLocation>
    <subcellularLocation>
        <location evidence="4">Cytoplasm</location>
        <location evidence="4">Cytosol</location>
    </subcellularLocation>
</comment>
<comment type="similarity">
    <text evidence="5">Belongs to the small GTPase superfamily. Rab family.</text>
</comment>
<proteinExistence type="evidence at protein level"/>
<accession>Q9SMR4</accession>
<evidence type="ECO:0000250" key="1"/>
<evidence type="ECO:0000256" key="2">
    <source>
        <dbReference type="SAM" id="MobiDB-lite"/>
    </source>
</evidence>
<evidence type="ECO:0000269" key="3">
    <source>
    </source>
</evidence>
<evidence type="ECO:0000269" key="4">
    <source>
    </source>
</evidence>
<evidence type="ECO:0000305" key="5"/>
<evidence type="ECO:0000305" key="6">
    <source>
    </source>
</evidence>
<feature type="chain" id="PRO_0000348543" description="Ras-related protein RABH1c">
    <location>
        <begin position="1"/>
        <end position="214"/>
    </location>
</feature>
<feature type="region of interest" description="Disordered" evidence="2">
    <location>
        <begin position="194"/>
        <end position="214"/>
    </location>
</feature>
<feature type="short sequence motif" description="Effector region" evidence="1">
    <location>
        <begin position="38"/>
        <end position="46"/>
    </location>
</feature>
<feature type="compositionally biased region" description="Gly residues" evidence="2">
    <location>
        <begin position="202"/>
        <end position="214"/>
    </location>
</feature>
<feature type="binding site" evidence="1">
    <location>
        <begin position="16"/>
        <end position="23"/>
    </location>
    <ligand>
        <name>GTP</name>
        <dbReference type="ChEBI" id="CHEBI:37565"/>
    </ligand>
</feature>
<feature type="binding site" evidence="1">
    <location>
        <begin position="64"/>
        <end position="68"/>
    </location>
    <ligand>
        <name>GTP</name>
        <dbReference type="ChEBI" id="CHEBI:37565"/>
    </ligand>
</feature>
<feature type="binding site" evidence="1">
    <location>
        <begin position="123"/>
        <end position="126"/>
    </location>
    <ligand>
        <name>GTP</name>
        <dbReference type="ChEBI" id="CHEBI:37565"/>
    </ligand>
</feature>
<feature type="binding site" evidence="1">
    <location>
        <begin position="153"/>
        <end position="154"/>
    </location>
    <ligand>
        <name>GTP</name>
        <dbReference type="ChEBI" id="CHEBI:37565"/>
    </ligand>
</feature>
<feature type="modified residue" description="Cysteine methyl ester" evidence="1">
    <location>
        <position position="214"/>
    </location>
</feature>
<feature type="lipid moiety-binding region" description="S-geranylgeranyl cysteine" evidence="1">
    <location>
        <position position="212"/>
    </location>
</feature>
<feature type="lipid moiety-binding region" description="S-geranylgeranyl cysteine" evidence="1">
    <location>
        <position position="214"/>
    </location>
</feature>
<feature type="mutagenesis site" description="No effect on targeting to Golgi." evidence="4">
    <original>T</original>
    <variation>N</variation>
    <location>
        <position position="23"/>
    </location>
</feature>
<feature type="mutagenesis site" description="No effect on targeting to Golgi." evidence="4">
    <original>Q</original>
    <variation>L</variation>
    <location>
        <position position="68"/>
    </location>
</feature>
<feature type="mutagenesis site" description="Loss of targeting to Golgi." evidence="4">
    <original>N</original>
    <variation>I</variation>
    <location>
        <position position="123"/>
    </location>
</feature>
<name>RAH1C_ARATH</name>
<organism>
    <name type="scientific">Arabidopsis thaliana</name>
    <name type="common">Mouse-ear cress</name>
    <dbReference type="NCBI Taxonomy" id="3702"/>
    <lineage>
        <taxon>Eukaryota</taxon>
        <taxon>Viridiplantae</taxon>
        <taxon>Streptophyta</taxon>
        <taxon>Embryophyta</taxon>
        <taxon>Tracheophyta</taxon>
        <taxon>Spermatophyta</taxon>
        <taxon>Magnoliopsida</taxon>
        <taxon>eudicotyledons</taxon>
        <taxon>Gunneridae</taxon>
        <taxon>Pentapetalae</taxon>
        <taxon>rosids</taxon>
        <taxon>malvids</taxon>
        <taxon>Brassicales</taxon>
        <taxon>Brassicaceae</taxon>
        <taxon>Camelineae</taxon>
        <taxon>Arabidopsis</taxon>
    </lineage>
</organism>
<gene>
    <name type="primary">RABH1C</name>
    <name type="ordered locus">At4g39890</name>
    <name type="ORF">T5J17.60</name>
</gene>
<protein>
    <recommendedName>
        <fullName>Ras-related protein RABH1c</fullName>
        <shortName>AtRABH1c</shortName>
    </recommendedName>
</protein>
<keyword id="KW-0963">Cytoplasm</keyword>
<keyword id="KW-0931">ER-Golgi transport</keyword>
<keyword id="KW-0333">Golgi apparatus</keyword>
<keyword id="KW-0342">GTP-binding</keyword>
<keyword id="KW-0449">Lipoprotein</keyword>
<keyword id="KW-0472">Membrane</keyword>
<keyword id="KW-0488">Methylation</keyword>
<keyword id="KW-0547">Nucleotide-binding</keyword>
<keyword id="KW-0636">Prenylation</keyword>
<keyword id="KW-0653">Protein transport</keyword>
<keyword id="KW-1185">Reference proteome</keyword>
<keyword id="KW-0813">Transport</keyword>
<dbReference type="EMBL" id="AL035708">
    <property type="protein sequence ID" value="CAB38902.1"/>
    <property type="molecule type" value="Genomic_DNA"/>
</dbReference>
<dbReference type="EMBL" id="AL161596">
    <property type="protein sequence ID" value="CAB80652.1"/>
    <property type="molecule type" value="Genomic_DNA"/>
</dbReference>
<dbReference type="EMBL" id="CP002687">
    <property type="protein sequence ID" value="AEE87134.1"/>
    <property type="molecule type" value="Genomic_DNA"/>
</dbReference>
<dbReference type="EMBL" id="AF325109">
    <property type="protein sequence ID" value="AAK17177.1"/>
    <property type="molecule type" value="mRNA"/>
</dbReference>
<dbReference type="EMBL" id="AF386952">
    <property type="protein sequence ID" value="AAK62397.1"/>
    <property type="molecule type" value="mRNA"/>
</dbReference>
<dbReference type="EMBL" id="BT000043">
    <property type="protein sequence ID" value="AAN15362.1"/>
    <property type="molecule type" value="mRNA"/>
</dbReference>
<dbReference type="PIR" id="T06095">
    <property type="entry name" value="T06095"/>
</dbReference>
<dbReference type="RefSeq" id="NP_195699.1">
    <property type="nucleotide sequence ID" value="NM_120152.4"/>
</dbReference>
<dbReference type="SMR" id="Q9SMR4"/>
<dbReference type="BioGRID" id="15428">
    <property type="interactions" value="20"/>
</dbReference>
<dbReference type="FunCoup" id="Q9SMR4">
    <property type="interactions" value="1105"/>
</dbReference>
<dbReference type="IntAct" id="Q9SMR4">
    <property type="interactions" value="17"/>
</dbReference>
<dbReference type="STRING" id="3702.Q9SMR4"/>
<dbReference type="PaxDb" id="3702-AT4G39890.1"/>
<dbReference type="ProteomicsDB" id="235093"/>
<dbReference type="EnsemblPlants" id="AT4G39890.1">
    <property type="protein sequence ID" value="AT4G39890.1"/>
    <property type="gene ID" value="AT4G39890"/>
</dbReference>
<dbReference type="GeneID" id="830148"/>
<dbReference type="Gramene" id="AT4G39890.1">
    <property type="protein sequence ID" value="AT4G39890.1"/>
    <property type="gene ID" value="AT4G39890"/>
</dbReference>
<dbReference type="KEGG" id="ath:AT4G39890"/>
<dbReference type="Araport" id="AT4G39890"/>
<dbReference type="TAIR" id="AT4G39890">
    <property type="gene designation" value="RABH1C"/>
</dbReference>
<dbReference type="eggNOG" id="KOG0094">
    <property type="taxonomic scope" value="Eukaryota"/>
</dbReference>
<dbReference type="HOGENOM" id="CLU_041217_10_2_1"/>
<dbReference type="InParanoid" id="Q9SMR4"/>
<dbReference type="OMA" id="KEYGVMF"/>
<dbReference type="OrthoDB" id="9989112at2759"/>
<dbReference type="PhylomeDB" id="Q9SMR4"/>
<dbReference type="PRO" id="PR:Q9SMR4"/>
<dbReference type="Proteomes" id="UP000006548">
    <property type="component" value="Chromosome 4"/>
</dbReference>
<dbReference type="ExpressionAtlas" id="Q9SMR4">
    <property type="expression patterns" value="baseline and differential"/>
</dbReference>
<dbReference type="GO" id="GO:0005829">
    <property type="term" value="C:cytosol"/>
    <property type="evidence" value="ECO:0000314"/>
    <property type="project" value="UniProtKB"/>
</dbReference>
<dbReference type="GO" id="GO:0000139">
    <property type="term" value="C:Golgi membrane"/>
    <property type="evidence" value="ECO:0000314"/>
    <property type="project" value="UniProtKB"/>
</dbReference>
<dbReference type="GO" id="GO:0005886">
    <property type="term" value="C:plasma membrane"/>
    <property type="evidence" value="ECO:0007005"/>
    <property type="project" value="TAIR"/>
</dbReference>
<dbReference type="GO" id="GO:0005525">
    <property type="term" value="F:GTP binding"/>
    <property type="evidence" value="ECO:0007669"/>
    <property type="project" value="UniProtKB-KW"/>
</dbReference>
<dbReference type="GO" id="GO:0003924">
    <property type="term" value="F:GTPase activity"/>
    <property type="evidence" value="ECO:0007669"/>
    <property type="project" value="InterPro"/>
</dbReference>
<dbReference type="GO" id="GO:0015031">
    <property type="term" value="P:protein transport"/>
    <property type="evidence" value="ECO:0007669"/>
    <property type="project" value="UniProtKB-KW"/>
</dbReference>
<dbReference type="GO" id="GO:0016192">
    <property type="term" value="P:vesicle-mediated transport"/>
    <property type="evidence" value="ECO:0007669"/>
    <property type="project" value="UniProtKB-KW"/>
</dbReference>
<dbReference type="CDD" id="cd01861">
    <property type="entry name" value="Rab6"/>
    <property type="match status" value="1"/>
</dbReference>
<dbReference type="FunFam" id="3.40.50.300:FF:000229">
    <property type="entry name" value="Probable Ras-related protein Rab-6A"/>
    <property type="match status" value="1"/>
</dbReference>
<dbReference type="Gene3D" id="3.40.50.300">
    <property type="entry name" value="P-loop containing nucleotide triphosphate hydrolases"/>
    <property type="match status" value="1"/>
</dbReference>
<dbReference type="InterPro" id="IPR027417">
    <property type="entry name" value="P-loop_NTPase"/>
</dbReference>
<dbReference type="InterPro" id="IPR050227">
    <property type="entry name" value="Rab"/>
</dbReference>
<dbReference type="InterPro" id="IPR005225">
    <property type="entry name" value="Small_GTP-bd"/>
</dbReference>
<dbReference type="InterPro" id="IPR001806">
    <property type="entry name" value="Small_GTPase"/>
</dbReference>
<dbReference type="NCBIfam" id="TIGR00231">
    <property type="entry name" value="small_GTP"/>
    <property type="match status" value="1"/>
</dbReference>
<dbReference type="PANTHER" id="PTHR47977">
    <property type="entry name" value="RAS-RELATED PROTEIN RAB"/>
    <property type="match status" value="1"/>
</dbReference>
<dbReference type="Pfam" id="PF00071">
    <property type="entry name" value="Ras"/>
    <property type="match status" value="1"/>
</dbReference>
<dbReference type="PRINTS" id="PR00449">
    <property type="entry name" value="RASTRNSFRMNG"/>
</dbReference>
<dbReference type="SMART" id="SM00175">
    <property type="entry name" value="RAB"/>
    <property type="match status" value="1"/>
</dbReference>
<dbReference type="SMART" id="SM00176">
    <property type="entry name" value="RAN"/>
    <property type="match status" value="1"/>
</dbReference>
<dbReference type="SMART" id="SM00173">
    <property type="entry name" value="RAS"/>
    <property type="match status" value="1"/>
</dbReference>
<dbReference type="SMART" id="SM00174">
    <property type="entry name" value="RHO"/>
    <property type="match status" value="1"/>
</dbReference>
<dbReference type="SUPFAM" id="SSF52540">
    <property type="entry name" value="P-loop containing nucleoside triphosphate hydrolases"/>
    <property type="match status" value="1"/>
</dbReference>
<dbReference type="PROSITE" id="PS51419">
    <property type="entry name" value="RAB"/>
    <property type="match status" value="1"/>
</dbReference>
<reference key="1">
    <citation type="journal article" date="1999" name="Nature">
        <title>Sequence and analysis of chromosome 4 of the plant Arabidopsis thaliana.</title>
        <authorList>
            <person name="Mayer K.F.X."/>
            <person name="Schueller C."/>
            <person name="Wambutt R."/>
            <person name="Murphy G."/>
            <person name="Volckaert G."/>
            <person name="Pohl T."/>
            <person name="Duesterhoeft A."/>
            <person name="Stiekema W."/>
            <person name="Entian K.-D."/>
            <person name="Terryn N."/>
            <person name="Harris B."/>
            <person name="Ansorge W."/>
            <person name="Brandt P."/>
            <person name="Grivell L.A."/>
            <person name="Rieger M."/>
            <person name="Weichselgartner M."/>
            <person name="de Simone V."/>
            <person name="Obermaier B."/>
            <person name="Mache R."/>
            <person name="Mueller M."/>
            <person name="Kreis M."/>
            <person name="Delseny M."/>
            <person name="Puigdomenech P."/>
            <person name="Watson M."/>
            <person name="Schmidtheini T."/>
            <person name="Reichert B."/>
            <person name="Portetelle D."/>
            <person name="Perez-Alonso M."/>
            <person name="Boutry M."/>
            <person name="Bancroft I."/>
            <person name="Vos P."/>
            <person name="Hoheisel J."/>
            <person name="Zimmermann W."/>
            <person name="Wedler H."/>
            <person name="Ridley P."/>
            <person name="Langham S.-A."/>
            <person name="McCullagh B."/>
            <person name="Bilham L."/>
            <person name="Robben J."/>
            <person name="van der Schueren J."/>
            <person name="Grymonprez B."/>
            <person name="Chuang Y.-J."/>
            <person name="Vandenbussche F."/>
            <person name="Braeken M."/>
            <person name="Weltjens I."/>
            <person name="Voet M."/>
            <person name="Bastiaens I."/>
            <person name="Aert R."/>
            <person name="Defoor E."/>
            <person name="Weitzenegger T."/>
            <person name="Bothe G."/>
            <person name="Ramsperger U."/>
            <person name="Hilbert H."/>
            <person name="Braun M."/>
            <person name="Holzer E."/>
            <person name="Brandt A."/>
            <person name="Peters S."/>
            <person name="van Staveren M."/>
            <person name="Dirkse W."/>
            <person name="Mooijman P."/>
            <person name="Klein Lankhorst R."/>
            <person name="Rose M."/>
            <person name="Hauf J."/>
            <person name="Koetter P."/>
            <person name="Berneiser S."/>
            <person name="Hempel S."/>
            <person name="Feldpausch M."/>
            <person name="Lamberth S."/>
            <person name="Van den Daele H."/>
            <person name="De Keyser A."/>
            <person name="Buysshaert C."/>
            <person name="Gielen J."/>
            <person name="Villarroel R."/>
            <person name="De Clercq R."/>
            <person name="van Montagu M."/>
            <person name="Rogers J."/>
            <person name="Cronin A."/>
            <person name="Quail M.A."/>
            <person name="Bray-Allen S."/>
            <person name="Clark L."/>
            <person name="Doggett J."/>
            <person name="Hall S."/>
            <person name="Kay M."/>
            <person name="Lennard N."/>
            <person name="McLay K."/>
            <person name="Mayes R."/>
            <person name="Pettett A."/>
            <person name="Rajandream M.A."/>
            <person name="Lyne M."/>
            <person name="Benes V."/>
            <person name="Rechmann S."/>
            <person name="Borkova D."/>
            <person name="Bloecker H."/>
            <person name="Scharfe M."/>
            <person name="Grimm M."/>
            <person name="Loehnert T.-H."/>
            <person name="Dose S."/>
            <person name="de Haan M."/>
            <person name="Maarse A.C."/>
            <person name="Schaefer M."/>
            <person name="Mueller-Auer S."/>
            <person name="Gabel C."/>
            <person name="Fuchs M."/>
            <person name="Fartmann B."/>
            <person name="Granderath K."/>
            <person name="Dauner D."/>
            <person name="Herzl A."/>
            <person name="Neumann S."/>
            <person name="Argiriou A."/>
            <person name="Vitale D."/>
            <person name="Liguori R."/>
            <person name="Piravandi E."/>
            <person name="Massenet O."/>
            <person name="Quigley F."/>
            <person name="Clabauld G."/>
            <person name="Muendlein A."/>
            <person name="Felber R."/>
            <person name="Schnabl S."/>
            <person name="Hiller R."/>
            <person name="Schmidt W."/>
            <person name="Lecharny A."/>
            <person name="Aubourg S."/>
            <person name="Chefdor F."/>
            <person name="Cooke R."/>
            <person name="Berger C."/>
            <person name="Monfort A."/>
            <person name="Casacuberta E."/>
            <person name="Gibbons T."/>
            <person name="Weber N."/>
            <person name="Vandenbol M."/>
            <person name="Bargues M."/>
            <person name="Terol J."/>
            <person name="Torres A."/>
            <person name="Perez-Perez A."/>
            <person name="Purnelle B."/>
            <person name="Bent E."/>
            <person name="Johnson S."/>
            <person name="Tacon D."/>
            <person name="Jesse T."/>
            <person name="Heijnen L."/>
            <person name="Schwarz S."/>
            <person name="Scholler P."/>
            <person name="Heber S."/>
            <person name="Francs P."/>
            <person name="Bielke C."/>
            <person name="Frishman D."/>
            <person name="Haase D."/>
            <person name="Lemcke K."/>
            <person name="Mewes H.-W."/>
            <person name="Stocker S."/>
            <person name="Zaccaria P."/>
            <person name="Bevan M."/>
            <person name="Wilson R.K."/>
            <person name="de la Bastide M."/>
            <person name="Habermann K."/>
            <person name="Parnell L."/>
            <person name="Dedhia N."/>
            <person name="Gnoj L."/>
            <person name="Schutz K."/>
            <person name="Huang E."/>
            <person name="Spiegel L."/>
            <person name="Sekhon M."/>
            <person name="Murray J."/>
            <person name="Sheet P."/>
            <person name="Cordes M."/>
            <person name="Abu-Threideh J."/>
            <person name="Stoneking T."/>
            <person name="Kalicki J."/>
            <person name="Graves T."/>
            <person name="Harmon G."/>
            <person name="Edwards J."/>
            <person name="Latreille P."/>
            <person name="Courtney L."/>
            <person name="Cloud J."/>
            <person name="Abbott A."/>
            <person name="Scott K."/>
            <person name="Johnson D."/>
            <person name="Minx P."/>
            <person name="Bentley D."/>
            <person name="Fulton B."/>
            <person name="Miller N."/>
            <person name="Greco T."/>
            <person name="Kemp K."/>
            <person name="Kramer J."/>
            <person name="Fulton L."/>
            <person name="Mardis E."/>
            <person name="Dante M."/>
            <person name="Pepin K."/>
            <person name="Hillier L.W."/>
            <person name="Nelson J."/>
            <person name="Spieth J."/>
            <person name="Ryan E."/>
            <person name="Andrews S."/>
            <person name="Geisel C."/>
            <person name="Layman D."/>
            <person name="Du H."/>
            <person name="Ali J."/>
            <person name="Berghoff A."/>
            <person name="Jones K."/>
            <person name="Drone K."/>
            <person name="Cotton M."/>
            <person name="Joshu C."/>
            <person name="Antonoiu B."/>
            <person name="Zidanic M."/>
            <person name="Strong C."/>
            <person name="Sun H."/>
            <person name="Lamar B."/>
            <person name="Yordan C."/>
            <person name="Ma P."/>
            <person name="Zhong J."/>
            <person name="Preston R."/>
            <person name="Vil D."/>
            <person name="Shekher M."/>
            <person name="Matero A."/>
            <person name="Shah R."/>
            <person name="Swaby I.K."/>
            <person name="O'Shaughnessy A."/>
            <person name="Rodriguez M."/>
            <person name="Hoffman J."/>
            <person name="Till S."/>
            <person name="Granat S."/>
            <person name="Shohdy N."/>
            <person name="Hasegawa A."/>
            <person name="Hameed A."/>
            <person name="Lodhi M."/>
            <person name="Johnson A."/>
            <person name="Chen E."/>
            <person name="Marra M.A."/>
            <person name="Martienssen R."/>
            <person name="McCombie W.R."/>
        </authorList>
    </citation>
    <scope>NUCLEOTIDE SEQUENCE [LARGE SCALE GENOMIC DNA]</scope>
    <source>
        <strain>cv. Columbia</strain>
    </source>
</reference>
<reference key="2">
    <citation type="journal article" date="2017" name="Plant J.">
        <title>Araport11: a complete reannotation of the Arabidopsis thaliana reference genome.</title>
        <authorList>
            <person name="Cheng C.Y."/>
            <person name="Krishnakumar V."/>
            <person name="Chan A.P."/>
            <person name="Thibaud-Nissen F."/>
            <person name="Schobel S."/>
            <person name="Town C.D."/>
        </authorList>
    </citation>
    <scope>GENOME REANNOTATION</scope>
    <source>
        <strain>cv. Columbia</strain>
    </source>
</reference>
<reference key="3">
    <citation type="journal article" date="2003" name="Science">
        <title>Empirical analysis of transcriptional activity in the Arabidopsis genome.</title>
        <authorList>
            <person name="Yamada K."/>
            <person name="Lim J."/>
            <person name="Dale J.M."/>
            <person name="Chen H."/>
            <person name="Shinn P."/>
            <person name="Palm C.J."/>
            <person name="Southwick A.M."/>
            <person name="Wu H.C."/>
            <person name="Kim C.J."/>
            <person name="Nguyen M."/>
            <person name="Pham P.K."/>
            <person name="Cheuk R.F."/>
            <person name="Karlin-Newmann G."/>
            <person name="Liu S.X."/>
            <person name="Lam B."/>
            <person name="Sakano H."/>
            <person name="Wu T."/>
            <person name="Yu G."/>
            <person name="Miranda M."/>
            <person name="Quach H.L."/>
            <person name="Tripp M."/>
            <person name="Chang C.H."/>
            <person name="Lee J.M."/>
            <person name="Toriumi M.J."/>
            <person name="Chan M.M."/>
            <person name="Tang C.C."/>
            <person name="Onodera C.S."/>
            <person name="Deng J.M."/>
            <person name="Akiyama K."/>
            <person name="Ansari Y."/>
            <person name="Arakawa T."/>
            <person name="Banh J."/>
            <person name="Banno F."/>
            <person name="Bowser L."/>
            <person name="Brooks S.Y."/>
            <person name="Carninci P."/>
            <person name="Chao Q."/>
            <person name="Choy N."/>
            <person name="Enju A."/>
            <person name="Goldsmith A.D."/>
            <person name="Gurjal M."/>
            <person name="Hansen N.F."/>
            <person name="Hayashizaki Y."/>
            <person name="Johnson-Hopson C."/>
            <person name="Hsuan V.W."/>
            <person name="Iida K."/>
            <person name="Karnes M."/>
            <person name="Khan S."/>
            <person name="Koesema E."/>
            <person name="Ishida J."/>
            <person name="Jiang P.X."/>
            <person name="Jones T."/>
            <person name="Kawai J."/>
            <person name="Kamiya A."/>
            <person name="Meyers C."/>
            <person name="Nakajima M."/>
            <person name="Narusaka M."/>
            <person name="Seki M."/>
            <person name="Sakurai T."/>
            <person name="Satou M."/>
            <person name="Tamse R."/>
            <person name="Vaysberg M."/>
            <person name="Wallender E.K."/>
            <person name="Wong C."/>
            <person name="Yamamura Y."/>
            <person name="Yuan S."/>
            <person name="Shinozaki K."/>
            <person name="Davis R.W."/>
            <person name="Theologis A."/>
            <person name="Ecker J.R."/>
        </authorList>
    </citation>
    <scope>NUCLEOTIDE SEQUENCE [LARGE SCALE MRNA]</scope>
    <source>
        <strain>cv. Columbia</strain>
    </source>
</reference>
<reference key="4">
    <citation type="journal article" date="2003" name="Plant Physiol.">
        <title>Analysis of the small GTPase gene superfamily of Arabidopsis.</title>
        <authorList>
            <person name="Vernoud V."/>
            <person name="Horton A.C."/>
            <person name="Yang Z."/>
            <person name="Nielsen E."/>
        </authorList>
    </citation>
    <scope>GENE FAMILY</scope>
    <scope>NOMENCLATURE</scope>
</reference>
<reference key="5">
    <citation type="journal article" date="2007" name="J. Exp. Bot.">
        <title>Localization and domain characterization of Arabidopsis golgin candidates.</title>
        <authorList>
            <person name="Latijnhouwers M."/>
            <person name="Gillespie T."/>
            <person name="Boevink P."/>
            <person name="Kriechbaumer V."/>
            <person name="Hawes C."/>
            <person name="Carvalho C.M."/>
        </authorList>
    </citation>
    <scope>INTERACTION WITH GC5</scope>
</reference>
<reference key="6">
    <citation type="journal article" date="2009" name="J. Exp. Bot.">
        <title>AtRAB-H1b and AtRAB-H1c GTPases, homologues of the yeast Ypt6, target reporter proteins to the Golgi when expressed in Nicotiana tabacum and Arabidopsis thaliana.</title>
        <authorList>
            <person name="Johansen J.N."/>
            <person name="Chow C.M."/>
            <person name="Moore I."/>
            <person name="Hawes C."/>
        </authorList>
    </citation>
    <scope>SUBCELLULAR LOCATION</scope>
    <scope>MUTAGENESIS OF THR-23; GLN-68 AND ASN-123</scope>
</reference>